<proteinExistence type="evidence at protein level"/>
<name>SCP_HHV11</name>
<organism>
    <name type="scientific">Human herpesvirus 1 (strain 17)</name>
    <name type="common">HHV-1</name>
    <name type="synonym">Human herpes simplex virus 1</name>
    <dbReference type="NCBI Taxonomy" id="10299"/>
    <lineage>
        <taxon>Viruses</taxon>
        <taxon>Duplodnaviria</taxon>
        <taxon>Heunggongvirae</taxon>
        <taxon>Peploviricota</taxon>
        <taxon>Herviviricetes</taxon>
        <taxon>Herpesvirales</taxon>
        <taxon>Orthoherpesviridae</taxon>
        <taxon>Alphaherpesvirinae</taxon>
        <taxon>Simplexvirus</taxon>
        <taxon>Simplexvirus humanalpha1</taxon>
        <taxon>Human herpesvirus 1</taxon>
    </lineage>
</organism>
<keyword id="KW-0167">Capsid protein</keyword>
<keyword id="KW-0903">Direct protein sequencing</keyword>
<keyword id="KW-1048">Host nucleus</keyword>
<keyword id="KW-0945">Host-virus interaction</keyword>
<keyword id="KW-1185">Reference proteome</keyword>
<keyword id="KW-0946">Virion</keyword>
<organismHost>
    <name type="scientific">Homo sapiens</name>
    <name type="common">Human</name>
    <dbReference type="NCBI Taxonomy" id="9606"/>
</organismHost>
<dbReference type="EMBL" id="X14112">
    <property type="protein sequence ID" value="CAA32310.1"/>
    <property type="molecule type" value="Genomic_DNA"/>
</dbReference>
<dbReference type="PIR" id="H30085">
    <property type="entry name" value="WMBEH5"/>
</dbReference>
<dbReference type="RefSeq" id="YP_009137110.1">
    <property type="nucleotide sequence ID" value="NC_001806.2"/>
</dbReference>
<dbReference type="SMR" id="P10219"/>
<dbReference type="IntAct" id="P10219">
    <property type="interactions" value="1"/>
</dbReference>
<dbReference type="MINT" id="P10219"/>
<dbReference type="DNASU" id="2703356"/>
<dbReference type="GeneID" id="2703356"/>
<dbReference type="KEGG" id="vg:2703356"/>
<dbReference type="Proteomes" id="UP000009294">
    <property type="component" value="Segment"/>
</dbReference>
<dbReference type="GO" id="GO:0042025">
    <property type="term" value="C:host cell nucleus"/>
    <property type="evidence" value="ECO:0007669"/>
    <property type="project" value="UniProtKB-SubCell"/>
</dbReference>
<dbReference type="GO" id="GO:0019028">
    <property type="term" value="C:viral capsid"/>
    <property type="evidence" value="ECO:0007669"/>
    <property type="project" value="UniProtKB-UniRule"/>
</dbReference>
<dbReference type="GO" id="GO:0016032">
    <property type="term" value="P:viral process"/>
    <property type="evidence" value="ECO:0007669"/>
    <property type="project" value="UniProtKB-UniRule"/>
</dbReference>
<dbReference type="HAMAP" id="MF_04020">
    <property type="entry name" value="HSV_SCP_alphahv"/>
    <property type="match status" value="1"/>
</dbReference>
<dbReference type="InterPro" id="IPR007584">
    <property type="entry name" value="Herpes_UL35"/>
</dbReference>
<dbReference type="Pfam" id="PF04496">
    <property type="entry name" value="Herpes_UL35"/>
    <property type="match status" value="1"/>
</dbReference>
<feature type="chain" id="PRO_0000115734" description="Small capsomere-interacting protein">
    <location>
        <begin position="1"/>
        <end position="112"/>
    </location>
</feature>
<gene>
    <name evidence="1" type="primary">SCP</name>
    <name type="ordered locus">UL35</name>
</gene>
<accession>P10219</accession>
<sequence>MAVPQFHRPSTVTTDSVRALGMRGLVLATNNSQFIMDNNHPHPQGTQGAVREFLRGQAAALTDLGLAHANNTFTPQPMFAGDAPAAWLRPAFGLRRTYSPFVVREPSTPGTP</sequence>
<evidence type="ECO:0000255" key="1">
    <source>
        <dbReference type="HAMAP-Rule" id="MF_04020"/>
    </source>
</evidence>
<evidence type="ECO:0000269" key="2">
    <source>
    </source>
</evidence>
<evidence type="ECO:0000269" key="3">
    <source>
    </source>
</evidence>
<evidence type="ECO:0000269" key="4">
    <source>
    </source>
</evidence>
<evidence type="ECO:0000269" key="5">
    <source>
    </source>
</evidence>
<protein>
    <recommendedName>
        <fullName evidence="1">Small capsomere-interacting protein</fullName>
    </recommendedName>
</protein>
<reference key="1">
    <citation type="journal article" date="1988" name="J. Gen. Virol.">
        <title>The complete DNA sequence of the long unique region in the genome of herpes simplex virus type 1.</title>
        <authorList>
            <person name="McGeoch D.J."/>
            <person name="Dalrymple M.A."/>
            <person name="Davison A.J."/>
            <person name="Dolan A."/>
            <person name="Frame M.C."/>
            <person name="McNab D."/>
            <person name="Perry L.J."/>
            <person name="Scott J.E."/>
            <person name="Taylor P."/>
        </authorList>
    </citation>
    <scope>NUCLEOTIDE SEQUENCE [GENOMIC DNA]</scope>
</reference>
<reference key="2">
    <citation type="journal article" date="1996" name="J. Gen. Virol.">
        <title>Multiple interactions control the intracellular localization of the herpes simplex virus type 1 capsid proteins.</title>
        <authorList>
            <person name="Rixon F.J."/>
            <person name="Addison C."/>
            <person name="McGregor A."/>
            <person name="Macnab S.J."/>
            <person name="Nicholson P."/>
            <person name="Preston V.G."/>
            <person name="Tatman J.D."/>
        </authorList>
    </citation>
    <scope>SUBCELLULAR LOCATION</scope>
</reference>
<reference key="3">
    <citation type="journal article" date="2003" name="J. Virol.">
        <title>Residues of VP26 of herpes simplex virus type 1 that are required for its interaction with capsids.</title>
        <authorList>
            <person name="Desai P."/>
            <person name="Akpa J.C."/>
            <person name="Person S."/>
        </authorList>
    </citation>
    <scope>INTERACTION WITH MCP</scope>
    <source>
        <strain>KOS</strain>
    </source>
</reference>
<reference key="4">
    <citation type="journal article" date="2004" name="J. Biol. Chem.">
        <title>Herpes simplex virus type 1 capsid protein VP26 interacts with dynein light chains RP3 and Tctex1 and plays a role in retrograde cellular transport.</title>
        <authorList>
            <person name="Douglas M.W."/>
            <person name="Diefenbach R.J."/>
            <person name="Homa F.L."/>
            <person name="Miranda-Saksena M."/>
            <person name="Rixon F.J."/>
            <person name="Vittone V."/>
            <person name="Byth K."/>
            <person name="Cunningham A.L."/>
        </authorList>
    </citation>
    <scope>INTERACTION WITH HOST MAPRE3 AND DYNLT1</scope>
    <scope>FUNCTION</scope>
    <scope>SUBCELLULAR LOCATION</scope>
</reference>
<reference key="5">
    <citation type="journal article" date="2010" name="Virol. J.">
        <title>Egress of HSV-1 capsid requires the interaction of VP26 and a cellular tetraspanin membrane protein.</title>
        <authorList>
            <person name="Wang L."/>
            <person name="Liu L."/>
            <person name="Che Y."/>
            <person name="Wang L."/>
            <person name="Jiang L."/>
            <person name="Dong C."/>
            <person name="Zhang Y."/>
            <person name="Li Q."/>
        </authorList>
    </citation>
    <scope>INTERACTION WITH HOST TSPAN7</scope>
</reference>
<reference key="6">
    <citation type="journal article" date="1992" name="J. Gen. Virol.">
        <title>Identification of genes encoding two capsid proteins (VP24 and VP26) of herpes simplex virus type 1.</title>
        <authorList>
            <person name="Davison M.D."/>
            <person name="Rixon F.J."/>
            <person name="Davison A.J."/>
        </authorList>
    </citation>
    <scope>PROTEIN SEQUENCE OF 23-33 AND 37-47</scope>
</reference>
<comment type="function">
    <text evidence="1 3">Participates in the assembly of the infectious particles by decorating the outer surface of the capsid shell and thus forming a layer between the capsid and the tegument. Complexes composed of the major capsid protein and small capsomere-interacting protein/SCP assemble together in the host cytoplasm and are translocated to the nucleus, where they accumulate and participate in capsid assembly (By similarity). Interaction with host dynein light chains suggests a possible function in the retrogarde transport of incoming viral capsids.</text>
</comment>
<comment type="subunit">
    <text evidence="1 2 4">Interacts with the major capsid protein/MCP. Interacts with host TSPAN7; this interaction may be responsible for the presence of TSPAN7 in extracellular virions. Interacts with host MAPRE3 and DYNLT1; these interactions mediate retrograde transport of viral capsids.</text>
</comment>
<comment type="subcellular location">
    <subcellularLocation>
        <location evidence="1">Virion</location>
    </subcellularLocation>
    <subcellularLocation>
        <location evidence="1 3 5">Host nucleus</location>
    </subcellularLocation>
</comment>
<comment type="similarity">
    <text evidence="1">Belongs to the herpesviridae small capsomere-interacting protein family.</text>
</comment>